<sequence>MNVTLLIPARYGSSRFPGKPLAPINGKPMIQHVYERASLAKGLTNIYVATDDERIKSAVEGFGGKVVMTSPDAASGTDRINDAINQLGLKDDDLVINLQGDQPLIDPTSIEQVISLFERHPGEFEMATLGYEIVNKAELDDPMHVKMVFDNDYYALYFSRARIPFGRDTKDYPVYKHLGVYAYTRRFVQAFAALPLGRLEDLEKLEQLRALEHGHKIKVAISAFDSIEVDTPEDIRKCEQRLAVD</sequence>
<feature type="chain" id="PRO_0000370159" description="8-amino-3,8-dideoxy-manno-octulosonate cytidylyltransferase">
    <location>
        <begin position="1"/>
        <end position="245"/>
    </location>
</feature>
<dbReference type="EC" id="2.7.7.90" evidence="1"/>
<dbReference type="EMBL" id="CP000444">
    <property type="protein sequence ID" value="ABI43115.1"/>
    <property type="molecule type" value="Genomic_DNA"/>
</dbReference>
<dbReference type="SMR" id="Q0HUU0"/>
<dbReference type="KEGG" id="shm:Shewmr7_2127"/>
<dbReference type="HOGENOM" id="CLU_065038_0_1_6"/>
<dbReference type="UniPathway" id="UPA00030"/>
<dbReference type="GO" id="GO:0005829">
    <property type="term" value="C:cytosol"/>
    <property type="evidence" value="ECO:0007669"/>
    <property type="project" value="TreeGrafter"/>
</dbReference>
<dbReference type="GO" id="GO:0008690">
    <property type="term" value="F:3-deoxy-manno-octulosonate cytidylyltransferase activity"/>
    <property type="evidence" value="ECO:0007669"/>
    <property type="project" value="InterPro"/>
</dbReference>
<dbReference type="GO" id="GO:0009103">
    <property type="term" value="P:lipopolysaccharide biosynthetic process"/>
    <property type="evidence" value="ECO:0007669"/>
    <property type="project" value="UniProtKB-UniRule"/>
</dbReference>
<dbReference type="CDD" id="cd02517">
    <property type="entry name" value="CMP-KDO-Synthetase"/>
    <property type="match status" value="1"/>
</dbReference>
<dbReference type="FunFam" id="3.90.550.10:FF:000168">
    <property type="entry name" value="8-amino-3,8-dideoxy-manno-octulosonate cytidylyltransferase"/>
    <property type="match status" value="1"/>
</dbReference>
<dbReference type="Gene3D" id="3.90.550.10">
    <property type="entry name" value="Spore Coat Polysaccharide Biosynthesis Protein SpsA, Chain A"/>
    <property type="match status" value="1"/>
</dbReference>
<dbReference type="HAMAP" id="MF_00057">
    <property type="entry name" value="KdsB"/>
    <property type="match status" value="1"/>
</dbReference>
<dbReference type="InterPro" id="IPR003329">
    <property type="entry name" value="Cytidylyl_trans"/>
</dbReference>
<dbReference type="InterPro" id="IPR004528">
    <property type="entry name" value="KdsB"/>
</dbReference>
<dbReference type="InterPro" id="IPR029044">
    <property type="entry name" value="Nucleotide-diphossugar_trans"/>
</dbReference>
<dbReference type="NCBIfam" id="TIGR00466">
    <property type="entry name" value="kdsB"/>
    <property type="match status" value="1"/>
</dbReference>
<dbReference type="NCBIfam" id="NF003950">
    <property type="entry name" value="PRK05450.1-3"/>
    <property type="match status" value="1"/>
</dbReference>
<dbReference type="NCBIfam" id="NF003952">
    <property type="entry name" value="PRK05450.1-5"/>
    <property type="match status" value="1"/>
</dbReference>
<dbReference type="NCBIfam" id="NF009905">
    <property type="entry name" value="PRK13368.1"/>
    <property type="match status" value="1"/>
</dbReference>
<dbReference type="PANTHER" id="PTHR42866">
    <property type="entry name" value="3-DEOXY-MANNO-OCTULOSONATE CYTIDYLYLTRANSFERASE"/>
    <property type="match status" value="1"/>
</dbReference>
<dbReference type="PANTHER" id="PTHR42866:SF2">
    <property type="entry name" value="3-DEOXY-MANNO-OCTULOSONATE CYTIDYLYLTRANSFERASE, MITOCHONDRIAL"/>
    <property type="match status" value="1"/>
</dbReference>
<dbReference type="Pfam" id="PF02348">
    <property type="entry name" value="CTP_transf_3"/>
    <property type="match status" value="1"/>
</dbReference>
<dbReference type="SUPFAM" id="SSF53448">
    <property type="entry name" value="Nucleotide-diphospho-sugar transferases"/>
    <property type="match status" value="1"/>
</dbReference>
<organism>
    <name type="scientific">Shewanella sp. (strain MR-7)</name>
    <dbReference type="NCBI Taxonomy" id="60481"/>
    <lineage>
        <taxon>Bacteria</taxon>
        <taxon>Pseudomonadati</taxon>
        <taxon>Pseudomonadota</taxon>
        <taxon>Gammaproteobacteria</taxon>
        <taxon>Alteromonadales</taxon>
        <taxon>Shewanellaceae</taxon>
        <taxon>Shewanella</taxon>
    </lineage>
</organism>
<protein>
    <recommendedName>
        <fullName evidence="1">8-amino-3,8-dideoxy-manno-octulosonate cytidylyltransferase</fullName>
        <ecNumber evidence="1">2.7.7.90</ecNumber>
    </recommendedName>
    <alternativeName>
        <fullName evidence="1">CMP-8-amino-3,8-dideoxy-manno-octulosonate synthase</fullName>
    </alternativeName>
</protein>
<reference key="1">
    <citation type="submission" date="2006-08" db="EMBL/GenBank/DDBJ databases">
        <title>Complete sequence of chromosome 1 of Shewanella sp. MR-7.</title>
        <authorList>
            <person name="Copeland A."/>
            <person name="Lucas S."/>
            <person name="Lapidus A."/>
            <person name="Barry K."/>
            <person name="Detter J.C."/>
            <person name="Glavina del Rio T."/>
            <person name="Hammon N."/>
            <person name="Israni S."/>
            <person name="Dalin E."/>
            <person name="Tice H."/>
            <person name="Pitluck S."/>
            <person name="Kiss H."/>
            <person name="Brettin T."/>
            <person name="Bruce D."/>
            <person name="Han C."/>
            <person name="Tapia R."/>
            <person name="Gilna P."/>
            <person name="Schmutz J."/>
            <person name="Larimer F."/>
            <person name="Land M."/>
            <person name="Hauser L."/>
            <person name="Kyrpides N."/>
            <person name="Mikhailova N."/>
            <person name="Nealson K."/>
            <person name="Konstantinidis K."/>
            <person name="Klappenbach J."/>
            <person name="Tiedje J."/>
            <person name="Richardson P."/>
        </authorList>
    </citation>
    <scope>NUCLEOTIDE SEQUENCE [LARGE SCALE GENOMIC DNA]</scope>
    <source>
        <strain>MR-7</strain>
    </source>
</reference>
<proteinExistence type="inferred from homology"/>
<keyword id="KW-0963">Cytoplasm</keyword>
<keyword id="KW-0448">Lipopolysaccharide biosynthesis</keyword>
<keyword id="KW-0548">Nucleotidyltransferase</keyword>
<keyword id="KW-0808">Transferase</keyword>
<evidence type="ECO:0000255" key="1">
    <source>
        <dbReference type="HAMAP-Rule" id="MF_00057"/>
    </source>
</evidence>
<gene>
    <name evidence="1" type="primary">kdsB</name>
    <name type="ordered locus">Shewmr7_2127</name>
</gene>
<accession>Q0HUU0</accession>
<name>KDSB_SHESR</name>
<comment type="function">
    <text evidence="1">Activates KDO8N (a required 8-carbon sugar) for incorporation into bacterial lipopolysaccharide in the Shewanella genus.</text>
</comment>
<comment type="catalytic activity">
    <reaction evidence="1">
        <text>8-amino-3,8-dideoxy-alpha-D-manno-octulosonate + CTP = CMP-8-amino-3,8-dideoxy-alpha-D-manno-oct-2-ulosonate + diphosphate</text>
        <dbReference type="Rhea" id="RHEA:49284"/>
        <dbReference type="ChEBI" id="CHEBI:33019"/>
        <dbReference type="ChEBI" id="CHEBI:37563"/>
        <dbReference type="ChEBI" id="CHEBI:87091"/>
        <dbReference type="ChEBI" id="CHEBI:91089"/>
        <dbReference type="EC" id="2.7.7.90"/>
    </reaction>
</comment>
<comment type="pathway">
    <text evidence="1">Bacterial outer membrane biogenesis; lipopolysaccharide biosynthesis.</text>
</comment>
<comment type="subcellular location">
    <subcellularLocation>
        <location evidence="1">Cytoplasm</location>
    </subcellularLocation>
</comment>
<comment type="similarity">
    <text evidence="1">Belongs to the KdsB family.</text>
</comment>